<name>MIAB_SHEB5</name>
<sequence>MSKKLHIKTWGCQMNEYDSSKMADLLGEYQGYTLTEEASEADILLLNTCSIREKAQEKVFHQLGRWKTLKDKNPNLIIGVGGCVASQEGKAIKDRAQCVDIIFGPQTLHRLPEMIEQVRRGEKAVIDISFPEIEKFDRLPEPRAEGPTAFVSIMEGCSKYCSFCVVPYTRGEEVSRPSDDIILEIAQLAEQGVREVNLLGQNVNAYRGATHDGAICTFAELLRFVAAIDGIDRIRFTTSHPIEFTQDIIDVYEDTPELVSFLHLPVQSGSDRILTAMKRGHMAIEYKSIIRRLRKAREGIQISSDFIIGFPGETKEDFADTIKLIEDIGFDHSFSFIYSARPGTPAADLPDNVDMEEKKQRLAILQDRITQQAMRYSRHMMGTVQRILVEGPSVKNPMELRGRTENNRVVNFEGQPKHIGTFVDVEIVDVYTNSLRGVFIRGEDEMDLRRSLRPAEILAKRKQDDELGVTQFKP</sequence>
<protein>
    <recommendedName>
        <fullName evidence="1">tRNA-2-methylthio-N(6)-dimethylallyladenosine synthase</fullName>
        <ecNumber evidence="1">2.8.4.3</ecNumber>
    </recommendedName>
    <alternativeName>
        <fullName evidence="1">(Dimethylallyl)adenosine tRNA methylthiotransferase MiaB</fullName>
    </alternativeName>
    <alternativeName>
        <fullName evidence="1">tRNA-i(6)A37 methylthiotransferase</fullName>
    </alternativeName>
</protein>
<organism>
    <name type="scientific">Shewanella baltica (strain OS155 / ATCC BAA-1091)</name>
    <dbReference type="NCBI Taxonomy" id="325240"/>
    <lineage>
        <taxon>Bacteria</taxon>
        <taxon>Pseudomonadati</taxon>
        <taxon>Pseudomonadota</taxon>
        <taxon>Gammaproteobacteria</taxon>
        <taxon>Alteromonadales</taxon>
        <taxon>Shewanellaceae</taxon>
        <taxon>Shewanella</taxon>
    </lineage>
</organism>
<comment type="function">
    <text evidence="1">Catalyzes the methylthiolation of N6-(dimethylallyl)adenosine (i(6)A), leading to the formation of 2-methylthio-N6-(dimethylallyl)adenosine (ms(2)i(6)A) at position 37 in tRNAs that read codons beginning with uridine.</text>
</comment>
<comment type="catalytic activity">
    <reaction evidence="1">
        <text>N(6)-dimethylallyladenosine(37) in tRNA + (sulfur carrier)-SH + AH2 + 2 S-adenosyl-L-methionine = 2-methylsulfanyl-N(6)-dimethylallyladenosine(37) in tRNA + (sulfur carrier)-H + 5'-deoxyadenosine + L-methionine + A + S-adenosyl-L-homocysteine + 2 H(+)</text>
        <dbReference type="Rhea" id="RHEA:37067"/>
        <dbReference type="Rhea" id="RHEA-COMP:10375"/>
        <dbReference type="Rhea" id="RHEA-COMP:10376"/>
        <dbReference type="Rhea" id="RHEA-COMP:14737"/>
        <dbReference type="Rhea" id="RHEA-COMP:14739"/>
        <dbReference type="ChEBI" id="CHEBI:13193"/>
        <dbReference type="ChEBI" id="CHEBI:15378"/>
        <dbReference type="ChEBI" id="CHEBI:17319"/>
        <dbReference type="ChEBI" id="CHEBI:17499"/>
        <dbReference type="ChEBI" id="CHEBI:29917"/>
        <dbReference type="ChEBI" id="CHEBI:57844"/>
        <dbReference type="ChEBI" id="CHEBI:57856"/>
        <dbReference type="ChEBI" id="CHEBI:59789"/>
        <dbReference type="ChEBI" id="CHEBI:64428"/>
        <dbReference type="ChEBI" id="CHEBI:74415"/>
        <dbReference type="ChEBI" id="CHEBI:74417"/>
        <dbReference type="EC" id="2.8.4.3"/>
    </reaction>
</comment>
<comment type="cofactor">
    <cofactor evidence="1">
        <name>[4Fe-4S] cluster</name>
        <dbReference type="ChEBI" id="CHEBI:49883"/>
    </cofactor>
    <text evidence="1">Binds 2 [4Fe-4S] clusters. One cluster is coordinated with 3 cysteines and an exchangeable S-adenosyl-L-methionine.</text>
</comment>
<comment type="subunit">
    <text evidence="1">Monomer.</text>
</comment>
<comment type="subcellular location">
    <subcellularLocation>
        <location evidence="1">Cytoplasm</location>
    </subcellularLocation>
</comment>
<comment type="similarity">
    <text evidence="1">Belongs to the methylthiotransferase family. MiaB subfamily.</text>
</comment>
<evidence type="ECO:0000255" key="1">
    <source>
        <dbReference type="HAMAP-Rule" id="MF_01864"/>
    </source>
</evidence>
<evidence type="ECO:0000255" key="2">
    <source>
        <dbReference type="PROSITE-ProRule" id="PRU01266"/>
    </source>
</evidence>
<keyword id="KW-0004">4Fe-4S</keyword>
<keyword id="KW-0963">Cytoplasm</keyword>
<keyword id="KW-0408">Iron</keyword>
<keyword id="KW-0411">Iron-sulfur</keyword>
<keyword id="KW-0479">Metal-binding</keyword>
<keyword id="KW-1185">Reference proteome</keyword>
<keyword id="KW-0949">S-adenosyl-L-methionine</keyword>
<keyword id="KW-0808">Transferase</keyword>
<keyword id="KW-0819">tRNA processing</keyword>
<accession>A3D7M8</accession>
<gene>
    <name evidence="1" type="primary">miaB</name>
    <name type="ordered locus">Sbal_3261</name>
</gene>
<proteinExistence type="inferred from homology"/>
<feature type="chain" id="PRO_0000374534" description="tRNA-2-methylthio-N(6)-dimethylallyladenosine synthase">
    <location>
        <begin position="1"/>
        <end position="474"/>
    </location>
</feature>
<feature type="domain" description="MTTase N-terminal" evidence="1">
    <location>
        <begin position="3"/>
        <end position="120"/>
    </location>
</feature>
<feature type="domain" description="Radical SAM core" evidence="2">
    <location>
        <begin position="143"/>
        <end position="375"/>
    </location>
</feature>
<feature type="domain" description="TRAM" evidence="1">
    <location>
        <begin position="378"/>
        <end position="441"/>
    </location>
</feature>
<feature type="binding site" evidence="1">
    <location>
        <position position="12"/>
    </location>
    <ligand>
        <name>[4Fe-4S] cluster</name>
        <dbReference type="ChEBI" id="CHEBI:49883"/>
        <label>1</label>
    </ligand>
</feature>
<feature type="binding site" evidence="1">
    <location>
        <position position="49"/>
    </location>
    <ligand>
        <name>[4Fe-4S] cluster</name>
        <dbReference type="ChEBI" id="CHEBI:49883"/>
        <label>1</label>
    </ligand>
</feature>
<feature type="binding site" evidence="1">
    <location>
        <position position="83"/>
    </location>
    <ligand>
        <name>[4Fe-4S] cluster</name>
        <dbReference type="ChEBI" id="CHEBI:49883"/>
        <label>1</label>
    </ligand>
</feature>
<feature type="binding site" evidence="1">
    <location>
        <position position="157"/>
    </location>
    <ligand>
        <name>[4Fe-4S] cluster</name>
        <dbReference type="ChEBI" id="CHEBI:49883"/>
        <label>2</label>
        <note>4Fe-4S-S-AdoMet</note>
    </ligand>
</feature>
<feature type="binding site" evidence="1">
    <location>
        <position position="161"/>
    </location>
    <ligand>
        <name>[4Fe-4S] cluster</name>
        <dbReference type="ChEBI" id="CHEBI:49883"/>
        <label>2</label>
        <note>4Fe-4S-S-AdoMet</note>
    </ligand>
</feature>
<feature type="binding site" evidence="1">
    <location>
        <position position="164"/>
    </location>
    <ligand>
        <name>[4Fe-4S] cluster</name>
        <dbReference type="ChEBI" id="CHEBI:49883"/>
        <label>2</label>
        <note>4Fe-4S-S-AdoMet</note>
    </ligand>
</feature>
<reference key="1">
    <citation type="submission" date="2007-02" db="EMBL/GenBank/DDBJ databases">
        <title>Complete sequence of chromosome of Shewanella baltica OS155.</title>
        <authorList>
            <consortium name="US DOE Joint Genome Institute"/>
            <person name="Copeland A."/>
            <person name="Lucas S."/>
            <person name="Lapidus A."/>
            <person name="Barry K."/>
            <person name="Detter J.C."/>
            <person name="Glavina del Rio T."/>
            <person name="Hammon N."/>
            <person name="Israni S."/>
            <person name="Dalin E."/>
            <person name="Tice H."/>
            <person name="Pitluck S."/>
            <person name="Sims D.R."/>
            <person name="Brettin T."/>
            <person name="Bruce D."/>
            <person name="Han C."/>
            <person name="Tapia R."/>
            <person name="Brainard J."/>
            <person name="Schmutz J."/>
            <person name="Larimer F."/>
            <person name="Land M."/>
            <person name="Hauser L."/>
            <person name="Kyrpides N."/>
            <person name="Mikhailova N."/>
            <person name="Brettar I."/>
            <person name="Klappenbach J."/>
            <person name="Konstantinidis K."/>
            <person name="Rodrigues J."/>
            <person name="Tiedje J."/>
            <person name="Richardson P."/>
        </authorList>
    </citation>
    <scope>NUCLEOTIDE SEQUENCE [LARGE SCALE GENOMIC DNA]</scope>
    <source>
        <strain>OS155 / ATCC BAA-1091</strain>
    </source>
</reference>
<dbReference type="EC" id="2.8.4.3" evidence="1"/>
<dbReference type="EMBL" id="CP000563">
    <property type="protein sequence ID" value="ABN62741.1"/>
    <property type="molecule type" value="Genomic_DNA"/>
</dbReference>
<dbReference type="RefSeq" id="WP_011847530.1">
    <property type="nucleotide sequence ID" value="NC_009052.1"/>
</dbReference>
<dbReference type="SMR" id="A3D7M8"/>
<dbReference type="STRING" id="325240.Sbal_3261"/>
<dbReference type="KEGG" id="sbl:Sbal_3261"/>
<dbReference type="HOGENOM" id="CLU_018697_2_0_6"/>
<dbReference type="OrthoDB" id="9805215at2"/>
<dbReference type="Proteomes" id="UP000001557">
    <property type="component" value="Chromosome"/>
</dbReference>
<dbReference type="GO" id="GO:0005829">
    <property type="term" value="C:cytosol"/>
    <property type="evidence" value="ECO:0007669"/>
    <property type="project" value="TreeGrafter"/>
</dbReference>
<dbReference type="GO" id="GO:0051539">
    <property type="term" value="F:4 iron, 4 sulfur cluster binding"/>
    <property type="evidence" value="ECO:0007669"/>
    <property type="project" value="UniProtKB-UniRule"/>
</dbReference>
<dbReference type="GO" id="GO:0046872">
    <property type="term" value="F:metal ion binding"/>
    <property type="evidence" value="ECO:0007669"/>
    <property type="project" value="UniProtKB-KW"/>
</dbReference>
<dbReference type="GO" id="GO:0035597">
    <property type="term" value="F:N6-isopentenyladenosine methylthiotransferase activity"/>
    <property type="evidence" value="ECO:0007669"/>
    <property type="project" value="TreeGrafter"/>
</dbReference>
<dbReference type="CDD" id="cd01335">
    <property type="entry name" value="Radical_SAM"/>
    <property type="match status" value="1"/>
</dbReference>
<dbReference type="FunFam" id="3.40.50.12160:FF:000001">
    <property type="entry name" value="tRNA-2-methylthio-N(6)-dimethylallyladenosine synthase"/>
    <property type="match status" value="1"/>
</dbReference>
<dbReference type="FunFam" id="3.80.30.20:FF:000001">
    <property type="entry name" value="tRNA-2-methylthio-N(6)-dimethylallyladenosine synthase 2"/>
    <property type="match status" value="1"/>
</dbReference>
<dbReference type="Gene3D" id="3.40.50.12160">
    <property type="entry name" value="Methylthiotransferase, N-terminal domain"/>
    <property type="match status" value="1"/>
</dbReference>
<dbReference type="Gene3D" id="3.80.30.20">
    <property type="entry name" value="tm_1862 like domain"/>
    <property type="match status" value="1"/>
</dbReference>
<dbReference type="HAMAP" id="MF_01864">
    <property type="entry name" value="tRNA_metthiotr_MiaB"/>
    <property type="match status" value="1"/>
</dbReference>
<dbReference type="InterPro" id="IPR006638">
    <property type="entry name" value="Elp3/MiaA/NifB-like_rSAM"/>
</dbReference>
<dbReference type="InterPro" id="IPR005839">
    <property type="entry name" value="Methylthiotransferase"/>
</dbReference>
<dbReference type="InterPro" id="IPR020612">
    <property type="entry name" value="Methylthiotransferase_CS"/>
</dbReference>
<dbReference type="InterPro" id="IPR013848">
    <property type="entry name" value="Methylthiotransferase_N"/>
</dbReference>
<dbReference type="InterPro" id="IPR038135">
    <property type="entry name" value="Methylthiotransferase_N_sf"/>
</dbReference>
<dbReference type="InterPro" id="IPR006463">
    <property type="entry name" value="MiaB_methiolase"/>
</dbReference>
<dbReference type="InterPro" id="IPR007197">
    <property type="entry name" value="rSAM"/>
</dbReference>
<dbReference type="InterPro" id="IPR023404">
    <property type="entry name" value="rSAM_horseshoe"/>
</dbReference>
<dbReference type="InterPro" id="IPR002792">
    <property type="entry name" value="TRAM_dom"/>
</dbReference>
<dbReference type="NCBIfam" id="TIGR01574">
    <property type="entry name" value="miaB-methiolase"/>
    <property type="match status" value="1"/>
</dbReference>
<dbReference type="NCBIfam" id="TIGR00089">
    <property type="entry name" value="MiaB/RimO family radical SAM methylthiotransferase"/>
    <property type="match status" value="1"/>
</dbReference>
<dbReference type="PANTHER" id="PTHR43020">
    <property type="entry name" value="CDK5 REGULATORY SUBUNIT-ASSOCIATED PROTEIN 1"/>
    <property type="match status" value="1"/>
</dbReference>
<dbReference type="PANTHER" id="PTHR43020:SF2">
    <property type="entry name" value="MITOCHONDRIAL TRNA METHYLTHIOTRANSFERASE CDK5RAP1"/>
    <property type="match status" value="1"/>
</dbReference>
<dbReference type="Pfam" id="PF04055">
    <property type="entry name" value="Radical_SAM"/>
    <property type="match status" value="1"/>
</dbReference>
<dbReference type="Pfam" id="PF01938">
    <property type="entry name" value="TRAM"/>
    <property type="match status" value="1"/>
</dbReference>
<dbReference type="Pfam" id="PF00919">
    <property type="entry name" value="UPF0004"/>
    <property type="match status" value="1"/>
</dbReference>
<dbReference type="SFLD" id="SFLDF00273">
    <property type="entry name" value="(dimethylallyl)adenosine_tRNA"/>
    <property type="match status" value="1"/>
</dbReference>
<dbReference type="SFLD" id="SFLDG01082">
    <property type="entry name" value="B12-binding_domain_containing"/>
    <property type="match status" value="1"/>
</dbReference>
<dbReference type="SFLD" id="SFLDG01061">
    <property type="entry name" value="methylthiotransferase"/>
    <property type="match status" value="1"/>
</dbReference>
<dbReference type="SMART" id="SM00729">
    <property type="entry name" value="Elp3"/>
    <property type="match status" value="1"/>
</dbReference>
<dbReference type="SUPFAM" id="SSF102114">
    <property type="entry name" value="Radical SAM enzymes"/>
    <property type="match status" value="1"/>
</dbReference>
<dbReference type="PROSITE" id="PS51449">
    <property type="entry name" value="MTTASE_N"/>
    <property type="match status" value="1"/>
</dbReference>
<dbReference type="PROSITE" id="PS01278">
    <property type="entry name" value="MTTASE_RADICAL"/>
    <property type="match status" value="1"/>
</dbReference>
<dbReference type="PROSITE" id="PS51918">
    <property type="entry name" value="RADICAL_SAM"/>
    <property type="match status" value="1"/>
</dbReference>
<dbReference type="PROSITE" id="PS50926">
    <property type="entry name" value="TRAM"/>
    <property type="match status" value="1"/>
</dbReference>